<gene>
    <name evidence="1" type="primary">rpmD</name>
    <name type="ordered locus">Shewmr4_0217</name>
</gene>
<sequence length="60" mass="6697">MATKTVKVTQTKSAIGRLPKHRATLTGLGLRRIGHTVELEDTPSVRGMINKVYYMVKVED</sequence>
<reference key="1">
    <citation type="submission" date="2006-08" db="EMBL/GenBank/DDBJ databases">
        <title>Complete sequence of Shewanella sp. MR-4.</title>
        <authorList>
            <consortium name="US DOE Joint Genome Institute"/>
            <person name="Copeland A."/>
            <person name="Lucas S."/>
            <person name="Lapidus A."/>
            <person name="Barry K."/>
            <person name="Detter J.C."/>
            <person name="Glavina del Rio T."/>
            <person name="Hammon N."/>
            <person name="Israni S."/>
            <person name="Dalin E."/>
            <person name="Tice H."/>
            <person name="Pitluck S."/>
            <person name="Kiss H."/>
            <person name="Brettin T."/>
            <person name="Bruce D."/>
            <person name="Han C."/>
            <person name="Tapia R."/>
            <person name="Gilna P."/>
            <person name="Schmutz J."/>
            <person name="Larimer F."/>
            <person name="Land M."/>
            <person name="Hauser L."/>
            <person name="Kyrpides N."/>
            <person name="Mikhailova N."/>
            <person name="Nealson K."/>
            <person name="Konstantinidis K."/>
            <person name="Klappenbach J."/>
            <person name="Tiedje J."/>
            <person name="Richardson P."/>
        </authorList>
    </citation>
    <scope>NUCLEOTIDE SEQUENCE [LARGE SCALE GENOMIC DNA]</scope>
    <source>
        <strain>MR-4</strain>
    </source>
</reference>
<protein>
    <recommendedName>
        <fullName evidence="1">Large ribosomal subunit protein uL30</fullName>
    </recommendedName>
    <alternativeName>
        <fullName evidence="2">50S ribosomal protein L30</fullName>
    </alternativeName>
</protein>
<keyword id="KW-0687">Ribonucleoprotein</keyword>
<keyword id="KW-0689">Ribosomal protein</keyword>
<evidence type="ECO:0000255" key="1">
    <source>
        <dbReference type="HAMAP-Rule" id="MF_01371"/>
    </source>
</evidence>
<evidence type="ECO:0000305" key="2"/>
<comment type="subunit">
    <text evidence="1">Part of the 50S ribosomal subunit.</text>
</comment>
<comment type="similarity">
    <text evidence="1">Belongs to the universal ribosomal protein uL30 family.</text>
</comment>
<feature type="chain" id="PRO_0000273852" description="Large ribosomal subunit protein uL30">
    <location>
        <begin position="1"/>
        <end position="60"/>
    </location>
</feature>
<accession>Q0HNR9</accession>
<organism>
    <name type="scientific">Shewanella sp. (strain MR-4)</name>
    <dbReference type="NCBI Taxonomy" id="60480"/>
    <lineage>
        <taxon>Bacteria</taxon>
        <taxon>Pseudomonadati</taxon>
        <taxon>Pseudomonadota</taxon>
        <taxon>Gammaproteobacteria</taxon>
        <taxon>Alteromonadales</taxon>
        <taxon>Shewanellaceae</taxon>
        <taxon>Shewanella</taxon>
    </lineage>
</organism>
<proteinExistence type="inferred from homology"/>
<dbReference type="EMBL" id="CP000446">
    <property type="protein sequence ID" value="ABI37298.1"/>
    <property type="molecule type" value="Genomic_DNA"/>
</dbReference>
<dbReference type="RefSeq" id="WP_007644440.1">
    <property type="nucleotide sequence ID" value="NC_008321.1"/>
</dbReference>
<dbReference type="SMR" id="Q0HNR9"/>
<dbReference type="GeneID" id="94726204"/>
<dbReference type="KEGG" id="she:Shewmr4_0217"/>
<dbReference type="HOGENOM" id="CLU_131047_1_4_6"/>
<dbReference type="GO" id="GO:0022625">
    <property type="term" value="C:cytosolic large ribosomal subunit"/>
    <property type="evidence" value="ECO:0007669"/>
    <property type="project" value="TreeGrafter"/>
</dbReference>
<dbReference type="GO" id="GO:0003735">
    <property type="term" value="F:structural constituent of ribosome"/>
    <property type="evidence" value="ECO:0007669"/>
    <property type="project" value="InterPro"/>
</dbReference>
<dbReference type="GO" id="GO:0006412">
    <property type="term" value="P:translation"/>
    <property type="evidence" value="ECO:0007669"/>
    <property type="project" value="UniProtKB-UniRule"/>
</dbReference>
<dbReference type="CDD" id="cd01658">
    <property type="entry name" value="Ribosomal_L30"/>
    <property type="match status" value="1"/>
</dbReference>
<dbReference type="FunFam" id="3.30.1390.20:FF:000001">
    <property type="entry name" value="50S ribosomal protein L30"/>
    <property type="match status" value="1"/>
</dbReference>
<dbReference type="Gene3D" id="3.30.1390.20">
    <property type="entry name" value="Ribosomal protein L30, ferredoxin-like fold domain"/>
    <property type="match status" value="1"/>
</dbReference>
<dbReference type="HAMAP" id="MF_01371_B">
    <property type="entry name" value="Ribosomal_uL30_B"/>
    <property type="match status" value="1"/>
</dbReference>
<dbReference type="InterPro" id="IPR036919">
    <property type="entry name" value="Ribo_uL30_ferredoxin-like_sf"/>
</dbReference>
<dbReference type="InterPro" id="IPR005996">
    <property type="entry name" value="Ribosomal_uL30_bac-type"/>
</dbReference>
<dbReference type="InterPro" id="IPR018038">
    <property type="entry name" value="Ribosomal_uL30_CS"/>
</dbReference>
<dbReference type="InterPro" id="IPR016082">
    <property type="entry name" value="Ribosomal_uL30_ferredoxin-like"/>
</dbReference>
<dbReference type="NCBIfam" id="TIGR01308">
    <property type="entry name" value="rpmD_bact"/>
    <property type="match status" value="1"/>
</dbReference>
<dbReference type="PANTHER" id="PTHR15892:SF2">
    <property type="entry name" value="LARGE RIBOSOMAL SUBUNIT PROTEIN UL30M"/>
    <property type="match status" value="1"/>
</dbReference>
<dbReference type="PANTHER" id="PTHR15892">
    <property type="entry name" value="MITOCHONDRIAL RIBOSOMAL PROTEIN L30"/>
    <property type="match status" value="1"/>
</dbReference>
<dbReference type="Pfam" id="PF00327">
    <property type="entry name" value="Ribosomal_L30"/>
    <property type="match status" value="1"/>
</dbReference>
<dbReference type="PIRSF" id="PIRSF002211">
    <property type="entry name" value="Ribosomal_L30_bac-type"/>
    <property type="match status" value="1"/>
</dbReference>
<dbReference type="SUPFAM" id="SSF55129">
    <property type="entry name" value="Ribosomal protein L30p/L7e"/>
    <property type="match status" value="1"/>
</dbReference>
<dbReference type="PROSITE" id="PS00634">
    <property type="entry name" value="RIBOSOMAL_L30"/>
    <property type="match status" value="1"/>
</dbReference>
<name>RL30_SHESM</name>